<reference key="1">
    <citation type="journal article" date="2007" name="Nature">
        <title>Evolution of genes and genomes on the Drosophila phylogeny.</title>
        <authorList>
            <consortium name="Drosophila 12 genomes consortium"/>
        </authorList>
    </citation>
    <scope>NUCLEOTIDE SEQUENCE [LARGE SCALE GENOMIC DNA]</scope>
    <source>
        <strain>Tucson 15010-1051.87</strain>
    </source>
</reference>
<keyword id="KW-0001">2Fe-2S</keyword>
<keyword id="KW-0256">Endoplasmic reticulum</keyword>
<keyword id="KW-0408">Iron</keyword>
<keyword id="KW-0411">Iron-sulfur</keyword>
<keyword id="KW-0472">Membrane</keyword>
<keyword id="KW-0479">Metal-binding</keyword>
<keyword id="KW-1185">Reference proteome</keyword>
<keyword id="KW-0812">Transmembrane</keyword>
<keyword id="KW-1133">Transmembrane helix</keyword>
<protein>
    <recommendedName>
        <fullName>CDGSH iron-sulfur domain-containing protein 2 homolog</fullName>
    </recommendedName>
</protein>
<gene>
    <name evidence="2" type="primary">Cisd2</name>
    <name type="ORF">GJ14516</name>
</gene>
<evidence type="ECO:0000250" key="1"/>
<evidence type="ECO:0000250" key="2">
    <source>
        <dbReference type="UniProtKB" id="Q9VAM6"/>
    </source>
</evidence>
<evidence type="ECO:0000255" key="3"/>
<evidence type="ECO:0000305" key="4"/>
<proteinExistence type="inferred from homology"/>
<name>CISD2_DROVI</name>
<accession>B4MBU8</accession>
<sequence length="133" mass="14789">MQSVSQVVKTSLPNYLSSLPVPDTFGGWFKLSFKDWLALIPPTAVVVGIGYVTYRAFYPKAHRTCKSGSGLCNENVRKHEAKVVDMIDIENIADKAAFCRCWKTKNWPYCDGSHAAHNKDTGDNVGPIVIKKK</sequence>
<feature type="chain" id="PRO_0000392030" description="CDGSH iron-sulfur domain-containing protein 2 homolog">
    <location>
        <begin position="1"/>
        <end position="133"/>
    </location>
</feature>
<feature type="topological domain" description="Lumenal" evidence="3">
    <location>
        <begin position="1"/>
        <end position="35"/>
    </location>
</feature>
<feature type="transmembrane region" description="Helical" evidence="3">
    <location>
        <begin position="36"/>
        <end position="58"/>
    </location>
</feature>
<feature type="topological domain" description="Cytoplasmic" evidence="3">
    <location>
        <begin position="59"/>
        <end position="133"/>
    </location>
</feature>
<feature type="binding site" evidence="1">
    <location>
        <position position="99"/>
    </location>
    <ligand>
        <name>[2Fe-2S] cluster</name>
        <dbReference type="ChEBI" id="CHEBI:190135"/>
    </ligand>
</feature>
<feature type="binding site" evidence="1">
    <location>
        <position position="101"/>
    </location>
    <ligand>
        <name>[2Fe-2S] cluster</name>
        <dbReference type="ChEBI" id="CHEBI:190135"/>
    </ligand>
</feature>
<feature type="binding site" evidence="1">
    <location>
        <position position="110"/>
    </location>
    <ligand>
        <name>[2Fe-2S] cluster</name>
        <dbReference type="ChEBI" id="CHEBI:190135"/>
    </ligand>
</feature>
<feature type="binding site" evidence="1">
    <location>
        <position position="114"/>
    </location>
    <ligand>
        <name>[2Fe-2S] cluster</name>
        <dbReference type="ChEBI" id="CHEBI:190135"/>
    </ligand>
</feature>
<organism>
    <name type="scientific">Drosophila virilis</name>
    <name type="common">Fruit fly</name>
    <dbReference type="NCBI Taxonomy" id="7244"/>
    <lineage>
        <taxon>Eukaryota</taxon>
        <taxon>Metazoa</taxon>
        <taxon>Ecdysozoa</taxon>
        <taxon>Arthropoda</taxon>
        <taxon>Hexapoda</taxon>
        <taxon>Insecta</taxon>
        <taxon>Pterygota</taxon>
        <taxon>Neoptera</taxon>
        <taxon>Endopterygota</taxon>
        <taxon>Diptera</taxon>
        <taxon>Brachycera</taxon>
        <taxon>Muscomorpha</taxon>
        <taxon>Ephydroidea</taxon>
        <taxon>Drosophilidae</taxon>
        <taxon>Drosophila</taxon>
    </lineage>
</organism>
<dbReference type="EMBL" id="CH940656">
    <property type="protein sequence ID" value="EDW58569.1"/>
    <property type="molecule type" value="Genomic_DNA"/>
</dbReference>
<dbReference type="RefSeq" id="XP_002058601.1">
    <property type="nucleotide sequence ID" value="XM_002058565.4"/>
</dbReference>
<dbReference type="SMR" id="B4MBU8"/>
<dbReference type="FunCoup" id="B4MBU8">
    <property type="interactions" value="1388"/>
</dbReference>
<dbReference type="STRING" id="7244.B4MBU8"/>
<dbReference type="EnsemblMetazoa" id="FBtr0230441">
    <property type="protein sequence ID" value="FBpp0228933"/>
    <property type="gene ID" value="FBgn0201727"/>
</dbReference>
<dbReference type="EnsemblMetazoa" id="XM_002058565.3">
    <property type="protein sequence ID" value="XP_002058601.1"/>
    <property type="gene ID" value="LOC6634872"/>
</dbReference>
<dbReference type="GeneID" id="6634872"/>
<dbReference type="KEGG" id="dvi:6634872"/>
<dbReference type="CTD" id="493856"/>
<dbReference type="eggNOG" id="KOG3461">
    <property type="taxonomic scope" value="Eukaryota"/>
</dbReference>
<dbReference type="HOGENOM" id="CLU_132293_1_0_1"/>
<dbReference type="InParanoid" id="B4MBU8"/>
<dbReference type="OMA" id="QIRKHEP"/>
<dbReference type="OrthoDB" id="449252at2759"/>
<dbReference type="PhylomeDB" id="B4MBU8"/>
<dbReference type="Proteomes" id="UP000008792">
    <property type="component" value="Unassembled WGS sequence"/>
</dbReference>
<dbReference type="GO" id="GO:0005789">
    <property type="term" value="C:endoplasmic reticulum membrane"/>
    <property type="evidence" value="ECO:0007669"/>
    <property type="project" value="UniProtKB-SubCell"/>
</dbReference>
<dbReference type="GO" id="GO:0005741">
    <property type="term" value="C:mitochondrial outer membrane"/>
    <property type="evidence" value="ECO:0007669"/>
    <property type="project" value="EnsemblMetazoa"/>
</dbReference>
<dbReference type="GO" id="GO:0051537">
    <property type="term" value="F:2 iron, 2 sulfur cluster binding"/>
    <property type="evidence" value="ECO:0007669"/>
    <property type="project" value="UniProtKB-KW"/>
</dbReference>
<dbReference type="GO" id="GO:0046872">
    <property type="term" value="F:metal ion binding"/>
    <property type="evidence" value="ECO:0007669"/>
    <property type="project" value="UniProtKB-KW"/>
</dbReference>
<dbReference type="GO" id="GO:0006879">
    <property type="term" value="P:intracellular iron ion homeostasis"/>
    <property type="evidence" value="ECO:0007669"/>
    <property type="project" value="EnsemblMetazoa"/>
</dbReference>
<dbReference type="GO" id="GO:0006839">
    <property type="term" value="P:mitochondrial transport"/>
    <property type="evidence" value="ECO:0007669"/>
    <property type="project" value="EnsemblMetazoa"/>
</dbReference>
<dbReference type="GO" id="GO:0010506">
    <property type="term" value="P:regulation of autophagy"/>
    <property type="evidence" value="ECO:0007669"/>
    <property type="project" value="InterPro"/>
</dbReference>
<dbReference type="Gene3D" id="3.40.5.90">
    <property type="entry name" value="CDGSH iron-sulfur domain, mitoNEET-type"/>
    <property type="match status" value="1"/>
</dbReference>
<dbReference type="InterPro" id="IPR045131">
    <property type="entry name" value="CISD1/2"/>
</dbReference>
<dbReference type="InterPro" id="IPR018967">
    <property type="entry name" value="FeS-contain_CDGSH-typ"/>
</dbReference>
<dbReference type="InterPro" id="IPR019610">
    <property type="entry name" value="FeS-contain_mitoNEET_N"/>
</dbReference>
<dbReference type="InterPro" id="IPR042216">
    <property type="entry name" value="MitoNEET_CISD"/>
</dbReference>
<dbReference type="PANTHER" id="PTHR13680">
    <property type="entry name" value="CDGSH IRON-SULFUR DOMAIN-CONTAINING PROTEIN 1"/>
    <property type="match status" value="1"/>
</dbReference>
<dbReference type="PANTHER" id="PTHR13680:SF5">
    <property type="entry name" value="CDGSH IRON-SULFUR DOMAIN-CONTAINING PROTEIN 1"/>
    <property type="match status" value="1"/>
</dbReference>
<dbReference type="Pfam" id="PF10660">
    <property type="entry name" value="MitoNEET_N"/>
    <property type="match status" value="1"/>
</dbReference>
<dbReference type="Pfam" id="PF09360">
    <property type="entry name" value="zf-CDGSH"/>
    <property type="match status" value="1"/>
</dbReference>
<dbReference type="SMART" id="SM00704">
    <property type="entry name" value="ZnF_CDGSH"/>
    <property type="match status" value="1"/>
</dbReference>
<comment type="cofactor">
    <cofactor evidence="1">
        <name>[2Fe-2S] cluster</name>
        <dbReference type="ChEBI" id="CHEBI:190135"/>
    </cofactor>
    <text evidence="1">Binds 1 [2Fe-2S] cluster.</text>
</comment>
<comment type="subcellular location">
    <subcellularLocation>
        <location evidence="4">Endoplasmic reticulum membrane</location>
        <topology evidence="4">Single-pass membrane protein</topology>
    </subcellularLocation>
</comment>
<comment type="similarity">
    <text evidence="4">Belongs to the CISD protein family. CISD2 subfamily.</text>
</comment>